<dbReference type="EMBL" id="AY536122">
    <property type="protein sequence ID" value="AAT09811.1"/>
    <property type="molecule type" value="mRNA"/>
</dbReference>
<dbReference type="EMBL" id="JQ866908">
    <property type="protein sequence ID" value="AFK10194.1"/>
    <property type="molecule type" value="mRNA"/>
</dbReference>
<dbReference type="EMBL" id="AC207116">
    <property type="status" value="NOT_ANNOTATED_CDS"/>
    <property type="molecule type" value="Genomic_DNA"/>
</dbReference>
<dbReference type="EMBL" id="BT068231">
    <property type="protein sequence ID" value="ACN35128.1"/>
    <property type="molecule type" value="mRNA"/>
</dbReference>
<dbReference type="EMBL" id="EU954340">
    <property type="protein sequence ID" value="ACG26458.1"/>
    <property type="molecule type" value="mRNA"/>
</dbReference>
<dbReference type="RefSeq" id="NP_001106036.1">
    <property type="nucleotide sequence ID" value="NM_001112566.1"/>
</dbReference>
<dbReference type="SMR" id="Q6JB14"/>
<dbReference type="STRING" id="4577.Q6JB14"/>
<dbReference type="PaxDb" id="4577-GRMZM2G094054_P01"/>
<dbReference type="EnsemblPlants" id="Zm00001eb302040_T001">
    <molecule id="Q6JB14-2"/>
    <property type="protein sequence ID" value="Zm00001eb302040_P001"/>
    <property type="gene ID" value="Zm00001eb302040"/>
</dbReference>
<dbReference type="EnsemblPlants" id="Zm00001eb302040_T002">
    <molecule id="Q6JB14-1"/>
    <property type="protein sequence ID" value="Zm00001eb302040_P002"/>
    <property type="gene ID" value="Zm00001eb302040"/>
</dbReference>
<dbReference type="GeneID" id="100125634"/>
<dbReference type="Gramene" id="Zm00001eb302040_T001">
    <molecule id="Q6JB14-2"/>
    <property type="protein sequence ID" value="Zm00001eb302040_P001"/>
    <property type="gene ID" value="Zm00001eb302040"/>
</dbReference>
<dbReference type="Gramene" id="Zm00001eb302040_T002">
    <molecule id="Q6JB14-1"/>
    <property type="protein sequence ID" value="Zm00001eb302040_P002"/>
    <property type="gene ID" value="Zm00001eb302040"/>
</dbReference>
<dbReference type="KEGG" id="zma:100125634"/>
<dbReference type="InParanoid" id="Q6JB14"/>
<dbReference type="OrthoDB" id="680835at2759"/>
<dbReference type="Proteomes" id="UP000007305">
    <property type="component" value="Chromosome 7"/>
</dbReference>
<dbReference type="ExpressionAtlas" id="Q6JB14">
    <property type="expression patterns" value="baseline and differential"/>
</dbReference>
<dbReference type="InterPro" id="IPR056205">
    <property type="entry name" value="Meg"/>
</dbReference>
<dbReference type="Pfam" id="PF24153">
    <property type="entry name" value="Meg"/>
    <property type="match status" value="1"/>
</dbReference>
<gene>
    <name type="primary">MEG2</name>
    <name evidence="4" type="ORF">GRMZM2G088896</name>
</gene>
<accession>Q6JB14</accession>
<accession>B6SNM5</accession>
<reference key="1">
    <citation type="journal article" date="2004" name="Plant Cell">
        <title>maternally expressed gene1 is a novel maize endosperm transfer cell-specific gene with a maternal parent-of-origin pattern of expression.</title>
        <authorList>
            <person name="Gutierrez-Marcos J.F."/>
            <person name="Costa L.M."/>
            <person name="Biderre-Petit C."/>
            <person name="Khbaya B."/>
            <person name="O'Sullivan D.M."/>
            <person name="Wormald M."/>
            <person name="Perez P."/>
            <person name="Dickinson H.G."/>
        </authorList>
    </citation>
    <scope>NUCLEOTIDE SEQUENCE [MRNA] (ISOFORM 1)</scope>
    <scope>TISSUE SPECIFICITY</scope>
    <scope>DEVELOPMENTAL STAGE</scope>
    <scope>GENE FAMILY</scope>
    <scope>NOMENCLATURE</scope>
</reference>
<reference key="2">
    <citation type="submission" date="2012-03" db="EMBL/GenBank/DDBJ databases">
        <title>Isolation, characterization, and expression analyses of maternally expressed gene 2 (meg2) gene in maize.</title>
        <authorList>
            <person name="Li Q.-B."/>
            <person name="Chourey P."/>
        </authorList>
    </citation>
    <scope>NUCLEOTIDE SEQUENCE [MRNA] (ISOFORM 1)</scope>
    <source>
        <strain>cv. Wisconsin 22</strain>
    </source>
</reference>
<reference key="3">
    <citation type="journal article" date="2009" name="Science">
        <title>The B73 maize genome: complexity, diversity, and dynamics.</title>
        <authorList>
            <person name="Schnable P.S."/>
            <person name="Ware D."/>
            <person name="Fulton R.S."/>
            <person name="Stein J.C."/>
            <person name="Wei F."/>
            <person name="Pasternak S."/>
            <person name="Liang C."/>
            <person name="Zhang J."/>
            <person name="Fulton L."/>
            <person name="Graves T.A."/>
            <person name="Minx P."/>
            <person name="Reily A.D."/>
            <person name="Courtney L."/>
            <person name="Kruchowski S.S."/>
            <person name="Tomlinson C."/>
            <person name="Strong C."/>
            <person name="Delehaunty K."/>
            <person name="Fronick C."/>
            <person name="Courtney B."/>
            <person name="Rock S.M."/>
            <person name="Belter E."/>
            <person name="Du F."/>
            <person name="Kim K."/>
            <person name="Abbott R.M."/>
            <person name="Cotton M."/>
            <person name="Levy A."/>
            <person name="Marchetto P."/>
            <person name="Ochoa K."/>
            <person name="Jackson S.M."/>
            <person name="Gillam B."/>
            <person name="Chen W."/>
            <person name="Yan L."/>
            <person name="Higginbotham J."/>
            <person name="Cardenas M."/>
            <person name="Waligorski J."/>
            <person name="Applebaum E."/>
            <person name="Phelps L."/>
            <person name="Falcone J."/>
            <person name="Kanchi K."/>
            <person name="Thane T."/>
            <person name="Scimone A."/>
            <person name="Thane N."/>
            <person name="Henke J."/>
            <person name="Wang T."/>
            <person name="Ruppert J."/>
            <person name="Shah N."/>
            <person name="Rotter K."/>
            <person name="Hodges J."/>
            <person name="Ingenthron E."/>
            <person name="Cordes M."/>
            <person name="Kohlberg S."/>
            <person name="Sgro J."/>
            <person name="Delgado B."/>
            <person name="Mead K."/>
            <person name="Chinwalla A."/>
            <person name="Leonard S."/>
            <person name="Crouse K."/>
            <person name="Collura K."/>
            <person name="Kudrna D."/>
            <person name="Currie J."/>
            <person name="He R."/>
            <person name="Angelova A."/>
            <person name="Rajasekar S."/>
            <person name="Mueller T."/>
            <person name="Lomeli R."/>
            <person name="Scara G."/>
            <person name="Ko A."/>
            <person name="Delaney K."/>
            <person name="Wissotski M."/>
            <person name="Lopez G."/>
            <person name="Campos D."/>
            <person name="Braidotti M."/>
            <person name="Ashley E."/>
            <person name="Golser W."/>
            <person name="Kim H."/>
            <person name="Lee S."/>
            <person name="Lin J."/>
            <person name="Dujmic Z."/>
            <person name="Kim W."/>
            <person name="Talag J."/>
            <person name="Zuccolo A."/>
            <person name="Fan C."/>
            <person name="Sebastian A."/>
            <person name="Kramer M."/>
            <person name="Spiegel L."/>
            <person name="Nascimento L."/>
            <person name="Zutavern T."/>
            <person name="Miller B."/>
            <person name="Ambroise C."/>
            <person name="Muller S."/>
            <person name="Spooner W."/>
            <person name="Narechania A."/>
            <person name="Ren L."/>
            <person name="Wei S."/>
            <person name="Kumari S."/>
            <person name="Faga B."/>
            <person name="Levy M.J."/>
            <person name="McMahan L."/>
            <person name="Van Buren P."/>
            <person name="Vaughn M.W."/>
            <person name="Ying K."/>
            <person name="Yeh C.-T."/>
            <person name="Emrich S.J."/>
            <person name="Jia Y."/>
            <person name="Kalyanaraman A."/>
            <person name="Hsia A.-P."/>
            <person name="Barbazuk W.B."/>
            <person name="Baucom R.S."/>
            <person name="Brutnell T.P."/>
            <person name="Carpita N.C."/>
            <person name="Chaparro C."/>
            <person name="Chia J.-M."/>
            <person name="Deragon J.-M."/>
            <person name="Estill J.C."/>
            <person name="Fu Y."/>
            <person name="Jeddeloh J.A."/>
            <person name="Han Y."/>
            <person name="Lee H."/>
            <person name="Li P."/>
            <person name="Lisch D.R."/>
            <person name="Liu S."/>
            <person name="Liu Z."/>
            <person name="Nagel D.H."/>
            <person name="McCann M.C."/>
            <person name="SanMiguel P."/>
            <person name="Myers A.M."/>
            <person name="Nettleton D."/>
            <person name="Nguyen J."/>
            <person name="Penning B.W."/>
            <person name="Ponnala L."/>
            <person name="Schneider K.L."/>
            <person name="Schwartz D.C."/>
            <person name="Sharma A."/>
            <person name="Soderlund C."/>
            <person name="Springer N.M."/>
            <person name="Sun Q."/>
            <person name="Wang H."/>
            <person name="Waterman M."/>
            <person name="Westerman R."/>
            <person name="Wolfgruber T.K."/>
            <person name="Yang L."/>
            <person name="Yu Y."/>
            <person name="Zhang L."/>
            <person name="Zhou S."/>
            <person name="Zhu Q."/>
            <person name="Bennetzen J.L."/>
            <person name="Dawe R.K."/>
            <person name="Jiang J."/>
            <person name="Jiang N."/>
            <person name="Presting G.G."/>
            <person name="Wessler S.R."/>
            <person name="Aluru S."/>
            <person name="Martienssen R.A."/>
            <person name="Clifton S.W."/>
            <person name="McCombie W.R."/>
            <person name="Wing R.A."/>
            <person name="Wilson R.K."/>
        </authorList>
    </citation>
    <scope>NUCLEOTIDE SEQUENCE [LARGE SCALE GENOMIC DNA]</scope>
    <source>
        <strain>cv. B73</strain>
    </source>
</reference>
<reference key="4">
    <citation type="journal article" date="2009" name="PLoS Genet.">
        <title>Sequencing, mapping, and analysis of 27,455 maize full-length cDNAs.</title>
        <authorList>
            <person name="Soderlund C."/>
            <person name="Descour A."/>
            <person name="Kudrna D."/>
            <person name="Bomhoff M."/>
            <person name="Boyd L."/>
            <person name="Currie J."/>
            <person name="Angelova A."/>
            <person name="Collura K."/>
            <person name="Wissotski M."/>
            <person name="Ashley E."/>
            <person name="Morrow D."/>
            <person name="Fernandes J."/>
            <person name="Walbot V."/>
            <person name="Yu Y."/>
        </authorList>
    </citation>
    <scope>NUCLEOTIDE SEQUENCE [LARGE SCALE MRNA] (ISOFORM 1)</scope>
    <source>
        <strain>cv. B73</strain>
    </source>
</reference>
<reference key="5">
    <citation type="journal article" date="2009" name="Plant Mol. Biol.">
        <title>Insights into corn genes derived from large-scale cDNA sequencing.</title>
        <authorList>
            <person name="Alexandrov N.N."/>
            <person name="Brover V.V."/>
            <person name="Freidin S."/>
            <person name="Troukhan M.E."/>
            <person name="Tatarinova T.V."/>
            <person name="Zhang H."/>
            <person name="Swaller T.J."/>
            <person name="Lu Y.-P."/>
            <person name="Bouck J."/>
            <person name="Flavell R.B."/>
            <person name="Feldmann K.A."/>
        </authorList>
    </citation>
    <scope>NUCLEOTIDE SEQUENCE [LARGE SCALE MRNA] (ISOFORM 2)</scope>
</reference>
<organism>
    <name type="scientific">Zea mays</name>
    <name type="common">Maize</name>
    <dbReference type="NCBI Taxonomy" id="4577"/>
    <lineage>
        <taxon>Eukaryota</taxon>
        <taxon>Viridiplantae</taxon>
        <taxon>Streptophyta</taxon>
        <taxon>Embryophyta</taxon>
        <taxon>Tracheophyta</taxon>
        <taxon>Spermatophyta</taxon>
        <taxon>Magnoliopsida</taxon>
        <taxon>Liliopsida</taxon>
        <taxon>Poales</taxon>
        <taxon>Poaceae</taxon>
        <taxon>PACMAD clade</taxon>
        <taxon>Panicoideae</taxon>
        <taxon>Andropogonodae</taxon>
        <taxon>Andropogoneae</taxon>
        <taxon>Tripsacinae</taxon>
        <taxon>Zea</taxon>
    </lineage>
</organism>
<protein>
    <recommendedName>
        <fullName>Protein MATERNALLY EXPRESSED GENE 2</fullName>
    </recommendedName>
</protein>
<evidence type="ECO:0000250" key="1"/>
<evidence type="ECO:0000269" key="2">
    <source>
    </source>
</evidence>
<evidence type="ECO:0000303" key="3">
    <source>
    </source>
</evidence>
<evidence type="ECO:0000305" key="4"/>
<sequence>MEYRKRVDALVFFSLLLLGYFAAHAHGKGHVTDDVGVSTPAKEGIMQGNGARCVVGFPPCKDNKCYCCIGGRTHARYSTMAECRHACF</sequence>
<name>MEG2_MAIZE</name>
<proteinExistence type="evidence at transcript level"/>
<comment type="alternative products">
    <event type="alternative splicing"/>
    <isoform>
        <id>Q6JB14-1</id>
        <name>1</name>
        <sequence type="displayed"/>
    </isoform>
    <isoform>
        <id>Q6JB14-2</id>
        <name>2</name>
        <sequence type="described" ref="VSP_055464"/>
    </isoform>
</comment>
<comment type="tissue specificity">
    <text evidence="2">Expressed exclusively in endosperm.</text>
</comment>
<comment type="developmental stage">
    <text evidence="2">Expressed from 4 to 20 days after pollination.</text>
</comment>
<comment type="similarity">
    <text evidence="4">Belongs to the MEG family.</text>
</comment>
<keyword id="KW-0025">Alternative splicing</keyword>
<keyword id="KW-0217">Developmental protein</keyword>
<keyword id="KW-1015">Disulfide bond</keyword>
<keyword id="KW-1185">Reference proteome</keyword>
<keyword id="KW-0732">Signal</keyword>
<feature type="signal peptide" evidence="1">
    <location>
        <begin position="1"/>
        <end position="27"/>
    </location>
</feature>
<feature type="chain" id="PRO_0000430074" description="Protein MATERNALLY EXPRESSED GENE 2">
    <location>
        <begin position="28"/>
        <end position="88"/>
    </location>
</feature>
<feature type="disulfide bond" evidence="1">
    <location>
        <begin position="65"/>
        <end position="87"/>
    </location>
</feature>
<feature type="splice variant" id="VSP_055464" description="In isoform 2." evidence="3">
    <location>
        <begin position="29"/>
        <end position="32"/>
    </location>
</feature>
<feature type="sequence conflict" description="In Ref. 5; ACG26458." evidence="4" ref="5">
    <original>A</original>
    <variation>V</variation>
    <location>
        <position position="81"/>
    </location>
</feature>